<organism>
    <name type="scientific">Neisseria meningitidis serogroup A / serotype 4A (strain DSM 15465 / Z2491)</name>
    <dbReference type="NCBI Taxonomy" id="122587"/>
    <lineage>
        <taxon>Bacteria</taxon>
        <taxon>Pseudomonadati</taxon>
        <taxon>Pseudomonadota</taxon>
        <taxon>Betaproteobacteria</taxon>
        <taxon>Neisseriales</taxon>
        <taxon>Neisseriaceae</taxon>
        <taxon>Neisseria</taxon>
    </lineage>
</organism>
<name>RS5_NEIMA</name>
<comment type="function">
    <text evidence="1">With S4 and S12 plays an important role in translational accuracy.</text>
</comment>
<comment type="function">
    <text evidence="1">Located at the back of the 30S subunit body where it stabilizes the conformation of the head with respect to the body.</text>
</comment>
<comment type="subunit">
    <text evidence="1">Part of the 30S ribosomal subunit. Contacts proteins S4 and S8.</text>
</comment>
<comment type="domain">
    <text>The N-terminal domain interacts with the head of the 30S subunit; the C-terminal domain interacts with the body and contacts protein S4. The interaction surface between S4 and S5 is involved in control of translational fidelity.</text>
</comment>
<comment type="similarity">
    <text evidence="1">Belongs to the universal ribosomal protein uS5 family.</text>
</comment>
<protein>
    <recommendedName>
        <fullName evidence="1">Small ribosomal subunit protein uS5</fullName>
    </recommendedName>
    <alternativeName>
        <fullName evidence="2">30S ribosomal protein S5</fullName>
    </alternativeName>
</protein>
<proteinExistence type="inferred from homology"/>
<feature type="chain" id="PRO_0000131559" description="Small ribosomal subunit protein uS5">
    <location>
        <begin position="1"/>
        <end position="172"/>
    </location>
</feature>
<feature type="domain" description="S5 DRBM" evidence="1">
    <location>
        <begin position="13"/>
        <end position="76"/>
    </location>
</feature>
<sequence>MAKHEIEERGDGLIEKMVAVNRVTKVVKGGRIMAFSALTVVGDGDGRIGMGKGKSKEVPVAVQKAMDQARRSMIKVPLKNGTIHHEVIGRHGATKVFMQPAKEGSGVKAGGPMRLVFDAMGIHNISAKVHGSTNPYNIVRATLDGLSKLHTPADIAAKRGLTVEDILGVNHG</sequence>
<reference key="1">
    <citation type="journal article" date="2000" name="Nature">
        <title>Complete DNA sequence of a serogroup A strain of Neisseria meningitidis Z2491.</title>
        <authorList>
            <person name="Parkhill J."/>
            <person name="Achtman M."/>
            <person name="James K.D."/>
            <person name="Bentley S.D."/>
            <person name="Churcher C.M."/>
            <person name="Klee S.R."/>
            <person name="Morelli G."/>
            <person name="Basham D."/>
            <person name="Brown D."/>
            <person name="Chillingworth T."/>
            <person name="Davies R.M."/>
            <person name="Davis P."/>
            <person name="Devlin K."/>
            <person name="Feltwell T."/>
            <person name="Hamlin N."/>
            <person name="Holroyd S."/>
            <person name="Jagels K."/>
            <person name="Leather S."/>
            <person name="Moule S."/>
            <person name="Mungall K.L."/>
            <person name="Quail M.A."/>
            <person name="Rajandream M.A."/>
            <person name="Rutherford K.M."/>
            <person name="Simmonds M."/>
            <person name="Skelton J."/>
            <person name="Whitehead S."/>
            <person name="Spratt B.G."/>
            <person name="Barrell B.G."/>
        </authorList>
    </citation>
    <scope>NUCLEOTIDE SEQUENCE [LARGE SCALE GENOMIC DNA]</scope>
    <source>
        <strain>DSM 15465 / Z2491</strain>
    </source>
</reference>
<gene>
    <name evidence="1" type="primary">rpsE</name>
    <name type="ordered locus">NMA0112</name>
</gene>
<accession>P66576</accession>
<accession>A1INX3</accession>
<accession>Q9JQP3</accession>
<keyword id="KW-0687">Ribonucleoprotein</keyword>
<keyword id="KW-0689">Ribosomal protein</keyword>
<keyword id="KW-0694">RNA-binding</keyword>
<keyword id="KW-0699">rRNA-binding</keyword>
<evidence type="ECO:0000255" key="1">
    <source>
        <dbReference type="HAMAP-Rule" id="MF_01307"/>
    </source>
</evidence>
<evidence type="ECO:0000305" key="2"/>
<dbReference type="EMBL" id="AL157959">
    <property type="protein sequence ID" value="CAM07430.1"/>
    <property type="molecule type" value="Genomic_DNA"/>
</dbReference>
<dbReference type="RefSeq" id="WP_002215445.1">
    <property type="nucleotide sequence ID" value="NC_003116.1"/>
</dbReference>
<dbReference type="SMR" id="P66576"/>
<dbReference type="EnsemblBacteria" id="CAM07430">
    <property type="protein sequence ID" value="CAM07430"/>
    <property type="gene ID" value="NMA0112"/>
</dbReference>
<dbReference type="GeneID" id="93387234"/>
<dbReference type="KEGG" id="nma:NMA0112"/>
<dbReference type="HOGENOM" id="CLU_065898_2_2_4"/>
<dbReference type="Proteomes" id="UP000000626">
    <property type="component" value="Chromosome"/>
</dbReference>
<dbReference type="GO" id="GO:0015935">
    <property type="term" value="C:small ribosomal subunit"/>
    <property type="evidence" value="ECO:0007669"/>
    <property type="project" value="InterPro"/>
</dbReference>
<dbReference type="GO" id="GO:0019843">
    <property type="term" value="F:rRNA binding"/>
    <property type="evidence" value="ECO:0007669"/>
    <property type="project" value="UniProtKB-UniRule"/>
</dbReference>
<dbReference type="GO" id="GO:0003735">
    <property type="term" value="F:structural constituent of ribosome"/>
    <property type="evidence" value="ECO:0007669"/>
    <property type="project" value="InterPro"/>
</dbReference>
<dbReference type="GO" id="GO:0006412">
    <property type="term" value="P:translation"/>
    <property type="evidence" value="ECO:0007669"/>
    <property type="project" value="UniProtKB-UniRule"/>
</dbReference>
<dbReference type="FunFam" id="3.30.160.20:FF:000001">
    <property type="entry name" value="30S ribosomal protein S5"/>
    <property type="match status" value="1"/>
</dbReference>
<dbReference type="FunFam" id="3.30.230.10:FF:000002">
    <property type="entry name" value="30S ribosomal protein S5"/>
    <property type="match status" value="1"/>
</dbReference>
<dbReference type="Gene3D" id="3.30.160.20">
    <property type="match status" value="1"/>
</dbReference>
<dbReference type="Gene3D" id="3.30.230.10">
    <property type="match status" value="1"/>
</dbReference>
<dbReference type="HAMAP" id="MF_01307_B">
    <property type="entry name" value="Ribosomal_uS5_B"/>
    <property type="match status" value="1"/>
</dbReference>
<dbReference type="InterPro" id="IPR020568">
    <property type="entry name" value="Ribosomal_Su5_D2-typ_SF"/>
</dbReference>
<dbReference type="InterPro" id="IPR000851">
    <property type="entry name" value="Ribosomal_uS5"/>
</dbReference>
<dbReference type="InterPro" id="IPR005712">
    <property type="entry name" value="Ribosomal_uS5_bac-type"/>
</dbReference>
<dbReference type="InterPro" id="IPR005324">
    <property type="entry name" value="Ribosomal_uS5_C"/>
</dbReference>
<dbReference type="InterPro" id="IPR013810">
    <property type="entry name" value="Ribosomal_uS5_N"/>
</dbReference>
<dbReference type="InterPro" id="IPR018192">
    <property type="entry name" value="Ribosomal_uS5_N_CS"/>
</dbReference>
<dbReference type="InterPro" id="IPR014721">
    <property type="entry name" value="Ribsml_uS5_D2-typ_fold_subgr"/>
</dbReference>
<dbReference type="NCBIfam" id="TIGR01021">
    <property type="entry name" value="rpsE_bact"/>
    <property type="match status" value="1"/>
</dbReference>
<dbReference type="PANTHER" id="PTHR48277">
    <property type="entry name" value="MITOCHONDRIAL RIBOSOMAL PROTEIN S5"/>
    <property type="match status" value="1"/>
</dbReference>
<dbReference type="PANTHER" id="PTHR48277:SF1">
    <property type="entry name" value="MITOCHONDRIAL RIBOSOMAL PROTEIN S5"/>
    <property type="match status" value="1"/>
</dbReference>
<dbReference type="Pfam" id="PF00333">
    <property type="entry name" value="Ribosomal_S5"/>
    <property type="match status" value="1"/>
</dbReference>
<dbReference type="Pfam" id="PF03719">
    <property type="entry name" value="Ribosomal_S5_C"/>
    <property type="match status" value="1"/>
</dbReference>
<dbReference type="SUPFAM" id="SSF54768">
    <property type="entry name" value="dsRNA-binding domain-like"/>
    <property type="match status" value="1"/>
</dbReference>
<dbReference type="SUPFAM" id="SSF54211">
    <property type="entry name" value="Ribosomal protein S5 domain 2-like"/>
    <property type="match status" value="1"/>
</dbReference>
<dbReference type="PROSITE" id="PS00585">
    <property type="entry name" value="RIBOSOMAL_S5"/>
    <property type="match status" value="1"/>
</dbReference>
<dbReference type="PROSITE" id="PS50881">
    <property type="entry name" value="S5_DSRBD"/>
    <property type="match status" value="1"/>
</dbReference>